<comment type="function">
    <text evidence="1 2 6 7">Microtubule-severing enzyme that negatively regulates cell migration and wound healing (PubMed:25756798, PubMed:36523161). In migrating cells, targets dynamic microtubules (MTs) at the leading edge and severs them, thereby suppressing motility (PubMed:25756798, PubMed:36523161). Microtubule severing releases ARHGEF2 which activates RHOA, which in turn regulates focal ahesion turnover via focal adhesion kinase, as opposed to F-actin polymerization, to suppress cell motility (PubMed:36523161). Negative regulator of axon regeneration that suppresses axonal growth by selectively severing dynamic MTs in the distal axon shaft and growth cone (By similarity). Contributes to proper cell branching during endothelial and neuronal development (By similarity).</text>
</comment>
<comment type="catalytic activity">
    <reaction evidence="3">
        <text>ATP + H2O = ADP + phosphate + H(+)</text>
        <dbReference type="Rhea" id="RHEA:13065"/>
        <dbReference type="ChEBI" id="CHEBI:15377"/>
        <dbReference type="ChEBI" id="CHEBI:15378"/>
        <dbReference type="ChEBI" id="CHEBI:30616"/>
        <dbReference type="ChEBI" id="CHEBI:43474"/>
        <dbReference type="ChEBI" id="CHEBI:456216"/>
    </reaction>
</comment>
<comment type="cofactor">
    <cofactor evidence="3">
        <name>Mg(2+)</name>
        <dbReference type="ChEBI" id="CHEBI:18420"/>
    </cofactor>
</comment>
<comment type="subcellular location">
    <subcellularLocation>
        <location evidence="6">Cytoplasm</location>
        <location evidence="6">Cell cortex</location>
    </subcellularLocation>
    <text evidence="6">Localizes at the leading edge of migrating cells.</text>
</comment>
<comment type="similarity">
    <text evidence="8">Belongs to the AAA ATPase family.</text>
</comment>
<sequence>MHWTPEHAQPLNQWPEQHLDVSSTTPSPAHKLELPPGGRQRCHYAWAHDDISALTASNLLKRYAEKYSGVLDSPYERPALGGYSDASFLNGAKGDPEPWPGPEPPYPLASLHEGLPGTKSGGGGGSGALGGSPVLAGNLPEPLYAGNACGGPSAAPEYAAGYGGGYLAPGYCAQTGAALPPPPPAALLQPPPPPGYGPSAPLYNYPAGGYAAQPGYGALPPPPGPPPAPYLTPGLPAPTPLPAPAPPTAYGFPTAAPGAESGLSLKRKAADEGPEGRYRKYAYEPAKAPVADGASYPAADNGECRGNGFRAKPPGAAEEASGKYGGGVPLKVLGSPVYGPQLEPFEKFPERAPAPRGGFAVPSGETPKGVDPGALELVTSKMVDCGPPVQWADVAGQGALKAALEEELVWPLLRPPAYPGSLRPPRTVLLFGPRGAGKALLGRCLATQLGATLLRLRGATLAAPGAAEGARLLQAAFAAARCRPPSVLLISELEALLPARDDGAAAGGALQVPLLACLDGGCGAGADGVLVVGTTSRPAALDEATRRRFSLRFYVALPDSPARGQILQRALAQQGCALSERELAALVQGTQGFSGGELGQLCQQAAAGAGLPGLQRPLSYKDLEAALAKVGPRASAKELDSFVEWDKMYGSGH</sequence>
<dbReference type="EC" id="3.6.4.-"/>
<dbReference type="EMBL" id="AC068987">
    <property type="status" value="NOT_ANNOTATED_CDS"/>
    <property type="molecule type" value="Genomic_DNA"/>
</dbReference>
<dbReference type="EMBL" id="BC156212">
    <property type="protein sequence ID" value="AAI56213.1"/>
    <property type="molecule type" value="mRNA"/>
</dbReference>
<dbReference type="CCDS" id="CCDS86302.1"/>
<dbReference type="RefSeq" id="NP_001013712.4">
    <property type="nucleotide sequence ID" value="NM_001013690.5"/>
</dbReference>
<dbReference type="RefSeq" id="NP_001371924.1">
    <property type="nucleotide sequence ID" value="NM_001384995.1"/>
</dbReference>
<dbReference type="RefSeq" id="NP_001371925.1">
    <property type="nucleotide sequence ID" value="NM_001384996.1"/>
</dbReference>
<dbReference type="RefSeq" id="XP_005268927.1">
    <property type="nucleotide sequence ID" value="XM_005268870.3"/>
</dbReference>
<dbReference type="SMR" id="A6NMB9"/>
<dbReference type="BioGRID" id="135217">
    <property type="interactions" value="7"/>
</dbReference>
<dbReference type="IntAct" id="A6NMB9">
    <property type="interactions" value="2"/>
</dbReference>
<dbReference type="STRING" id="9606.ENSP00000491257"/>
<dbReference type="GlyGen" id="A6NMB9">
    <property type="glycosylation" value="1 site"/>
</dbReference>
<dbReference type="iPTMnet" id="A6NMB9"/>
<dbReference type="PhosphoSitePlus" id="A6NMB9"/>
<dbReference type="BioMuta" id="FIGNL2"/>
<dbReference type="jPOST" id="A6NMB9"/>
<dbReference type="MassIVE" id="A6NMB9"/>
<dbReference type="PeptideAtlas" id="A6NMB9"/>
<dbReference type="Antibodypedia" id="78621">
    <property type="antibodies" value="7 antibodies from 4 providers"/>
</dbReference>
<dbReference type="DNASU" id="401720"/>
<dbReference type="Ensembl" id="ENST00000618634.3">
    <property type="protein sequence ID" value="ENSP00000491257.1"/>
    <property type="gene ID" value="ENSG00000261308.4"/>
</dbReference>
<dbReference type="GeneID" id="401720"/>
<dbReference type="KEGG" id="hsa:401720"/>
<dbReference type="MANE-Select" id="ENST00000618634.3">
    <property type="protein sequence ID" value="ENSP00000491257.1"/>
    <property type="RefSeq nucleotide sequence ID" value="NM_001384995.1"/>
    <property type="RefSeq protein sequence ID" value="NP_001371924.1"/>
</dbReference>
<dbReference type="AGR" id="HGNC:13287"/>
<dbReference type="CTD" id="401720"/>
<dbReference type="GeneCards" id="FIGNL2"/>
<dbReference type="HGNC" id="HGNC:13287">
    <property type="gene designation" value="FIGNL2"/>
</dbReference>
<dbReference type="HPA" id="ENSG00000261308">
    <property type="expression patterns" value="Tissue enhanced (kidney, parathyroid gland)"/>
</dbReference>
<dbReference type="MIM" id="620503">
    <property type="type" value="gene"/>
</dbReference>
<dbReference type="neXtProt" id="NX_A6NMB9"/>
<dbReference type="OpenTargets" id="ENSG00000261308"/>
<dbReference type="PharmGKB" id="PA162388579"/>
<dbReference type="VEuPathDB" id="HostDB:ENSG00000261308"/>
<dbReference type="GeneTree" id="ENSGT00940000161971"/>
<dbReference type="InParanoid" id="A6NMB9"/>
<dbReference type="OMA" id="CPQPNAA"/>
<dbReference type="OrthoDB" id="8803010at2759"/>
<dbReference type="PAN-GO" id="A6NMB9">
    <property type="GO annotations" value="1 GO annotation based on evolutionary models"/>
</dbReference>
<dbReference type="PhylomeDB" id="A6NMB9"/>
<dbReference type="PathwayCommons" id="A6NMB9"/>
<dbReference type="SignaLink" id="A6NMB9"/>
<dbReference type="BioGRID-ORCS" id="401720">
    <property type="hits" value="5 hits in 257 CRISPR screens"/>
</dbReference>
<dbReference type="ChiTaRS" id="FIGNL2">
    <property type="organism name" value="human"/>
</dbReference>
<dbReference type="GenomeRNAi" id="401720"/>
<dbReference type="Pharos" id="A6NMB9">
    <property type="development level" value="Tdark"/>
</dbReference>
<dbReference type="PRO" id="PR:A6NMB9"/>
<dbReference type="Proteomes" id="UP000005640">
    <property type="component" value="Chromosome 12"/>
</dbReference>
<dbReference type="RNAct" id="A6NMB9">
    <property type="molecule type" value="protein"/>
</dbReference>
<dbReference type="Bgee" id="ENSG00000261308">
    <property type="expression patterns" value="Expressed in metanephros cortex and 70 other cell types or tissues"/>
</dbReference>
<dbReference type="GO" id="GO:0005938">
    <property type="term" value="C:cell cortex"/>
    <property type="evidence" value="ECO:0007669"/>
    <property type="project" value="UniProtKB-SubCell"/>
</dbReference>
<dbReference type="GO" id="GO:0031252">
    <property type="term" value="C:cell leading edge"/>
    <property type="evidence" value="ECO:0000314"/>
    <property type="project" value="UniProtKB"/>
</dbReference>
<dbReference type="GO" id="GO:0005524">
    <property type="term" value="F:ATP binding"/>
    <property type="evidence" value="ECO:0007669"/>
    <property type="project" value="UniProtKB-KW"/>
</dbReference>
<dbReference type="GO" id="GO:0016887">
    <property type="term" value="F:ATP hydrolysis activity"/>
    <property type="evidence" value="ECO:0000318"/>
    <property type="project" value="GO_Central"/>
</dbReference>
<dbReference type="GO" id="GO:0008568">
    <property type="term" value="F:microtubule severing ATPase activity"/>
    <property type="evidence" value="ECO:0000318"/>
    <property type="project" value="GO_Central"/>
</dbReference>
<dbReference type="GO" id="GO:0051013">
    <property type="term" value="P:microtubule severing"/>
    <property type="evidence" value="ECO:0000315"/>
    <property type="project" value="UniProtKB"/>
</dbReference>
<dbReference type="GO" id="GO:0001763">
    <property type="term" value="P:morphogenesis of a branching structure"/>
    <property type="evidence" value="ECO:0000250"/>
    <property type="project" value="UniProtKB"/>
</dbReference>
<dbReference type="GO" id="GO:0048681">
    <property type="term" value="P:negative regulation of axon regeneration"/>
    <property type="evidence" value="ECO:0000250"/>
    <property type="project" value="UniProtKB"/>
</dbReference>
<dbReference type="GO" id="GO:0030336">
    <property type="term" value="P:negative regulation of cell migration"/>
    <property type="evidence" value="ECO:0000315"/>
    <property type="project" value="UniProtKB"/>
</dbReference>
<dbReference type="GO" id="GO:1903690">
    <property type="term" value="P:negative regulation of wound healing, spreading of epidermal cells"/>
    <property type="evidence" value="ECO:0000250"/>
    <property type="project" value="UniProtKB"/>
</dbReference>
<dbReference type="CDD" id="cd19523">
    <property type="entry name" value="RecA-like_fidgetin"/>
    <property type="match status" value="1"/>
</dbReference>
<dbReference type="FunFam" id="1.10.8.60:FF:000093">
    <property type="entry name" value="Fidgetin like 2"/>
    <property type="match status" value="1"/>
</dbReference>
<dbReference type="FunFam" id="3.40.50.300:FF:000495">
    <property type="entry name" value="Fidgetin like 2"/>
    <property type="match status" value="1"/>
</dbReference>
<dbReference type="Gene3D" id="1.10.8.60">
    <property type="match status" value="1"/>
</dbReference>
<dbReference type="Gene3D" id="3.40.50.300">
    <property type="entry name" value="P-loop containing nucleotide triphosphate hydrolases"/>
    <property type="match status" value="1"/>
</dbReference>
<dbReference type="InterPro" id="IPR003593">
    <property type="entry name" value="AAA+_ATPase"/>
</dbReference>
<dbReference type="InterPro" id="IPR003959">
    <property type="entry name" value="ATPase_AAA_core"/>
</dbReference>
<dbReference type="InterPro" id="IPR047828">
    <property type="entry name" value="Fidgetin_ATPase"/>
</dbReference>
<dbReference type="InterPro" id="IPR050304">
    <property type="entry name" value="MT-severing_AAA_ATPase"/>
</dbReference>
<dbReference type="InterPro" id="IPR027417">
    <property type="entry name" value="P-loop_NTPase"/>
</dbReference>
<dbReference type="PANTHER" id="PTHR23074">
    <property type="entry name" value="AAA DOMAIN-CONTAINING"/>
    <property type="match status" value="1"/>
</dbReference>
<dbReference type="PANTHER" id="PTHR23074:SF33">
    <property type="entry name" value="FIDGETIN-LIKE PROTEIN 2"/>
    <property type="match status" value="1"/>
</dbReference>
<dbReference type="Pfam" id="PF00004">
    <property type="entry name" value="AAA"/>
    <property type="match status" value="1"/>
</dbReference>
<dbReference type="SMART" id="SM00382">
    <property type="entry name" value="AAA"/>
    <property type="match status" value="1"/>
</dbReference>
<dbReference type="SUPFAM" id="SSF52540">
    <property type="entry name" value="P-loop containing nucleoside triphosphate hydrolases"/>
    <property type="match status" value="1"/>
</dbReference>
<organism>
    <name type="scientific">Homo sapiens</name>
    <name type="common">Human</name>
    <dbReference type="NCBI Taxonomy" id="9606"/>
    <lineage>
        <taxon>Eukaryota</taxon>
        <taxon>Metazoa</taxon>
        <taxon>Chordata</taxon>
        <taxon>Craniata</taxon>
        <taxon>Vertebrata</taxon>
        <taxon>Euteleostomi</taxon>
        <taxon>Mammalia</taxon>
        <taxon>Eutheria</taxon>
        <taxon>Euarchontoglires</taxon>
        <taxon>Primates</taxon>
        <taxon>Haplorrhini</taxon>
        <taxon>Catarrhini</taxon>
        <taxon>Hominidae</taxon>
        <taxon>Homo</taxon>
    </lineage>
</organism>
<protein>
    <recommendedName>
        <fullName evidence="8">Fidgetin-like protein 2</fullName>
        <ecNumber>3.6.4.-</ecNumber>
    </recommendedName>
</protein>
<accession>A6NMB9</accession>
<feature type="chain" id="PRO_0000343702" description="Fidgetin-like protein 2">
    <location>
        <begin position="1"/>
        <end position="653"/>
    </location>
</feature>
<feature type="region of interest" description="Disordered" evidence="5">
    <location>
        <begin position="1"/>
        <end position="36"/>
    </location>
</feature>
<feature type="region of interest" description="Disordered" evidence="5">
    <location>
        <begin position="86"/>
        <end position="129"/>
    </location>
</feature>
<feature type="region of interest" description="Disordered" evidence="5">
    <location>
        <begin position="216"/>
        <end position="240"/>
    </location>
</feature>
<feature type="compositionally biased region" description="Polar residues" evidence="5">
    <location>
        <begin position="10"/>
        <end position="27"/>
    </location>
</feature>
<feature type="compositionally biased region" description="Pro residues" evidence="5">
    <location>
        <begin position="97"/>
        <end position="107"/>
    </location>
</feature>
<feature type="compositionally biased region" description="Gly residues" evidence="5">
    <location>
        <begin position="119"/>
        <end position="129"/>
    </location>
</feature>
<feature type="compositionally biased region" description="Pro residues" evidence="5">
    <location>
        <begin position="219"/>
        <end position="240"/>
    </location>
</feature>
<feature type="binding site" evidence="4">
    <location>
        <position position="395"/>
    </location>
    <ligand>
        <name>ATP</name>
        <dbReference type="ChEBI" id="CHEBI:30616"/>
    </ligand>
</feature>
<feature type="binding site" evidence="4">
    <location>
        <begin position="435"/>
        <end position="440"/>
    </location>
    <ligand>
        <name>ATP</name>
        <dbReference type="ChEBI" id="CHEBI:30616"/>
    </ligand>
</feature>
<feature type="sequence variant" id="VAR_044425" description="In dbSNP:rs303819.">
    <original>T</original>
    <variation>P</variation>
    <location>
        <position position="366"/>
    </location>
</feature>
<keyword id="KW-0067">ATP-binding</keyword>
<keyword id="KW-0963">Cytoplasm</keyword>
<keyword id="KW-0378">Hydrolase</keyword>
<keyword id="KW-0547">Nucleotide-binding</keyword>
<keyword id="KW-1267">Proteomics identification</keyword>
<keyword id="KW-1185">Reference proteome</keyword>
<gene>
    <name evidence="9" type="primary">FIGNL2</name>
</gene>
<reference key="1">
    <citation type="journal article" date="2006" name="Nature">
        <title>The finished DNA sequence of human chromosome 12.</title>
        <authorList>
            <person name="Scherer S.E."/>
            <person name="Muzny D.M."/>
            <person name="Buhay C.J."/>
            <person name="Chen R."/>
            <person name="Cree A."/>
            <person name="Ding Y."/>
            <person name="Dugan-Rocha S."/>
            <person name="Gill R."/>
            <person name="Gunaratne P."/>
            <person name="Harris R.A."/>
            <person name="Hawes A.C."/>
            <person name="Hernandez J."/>
            <person name="Hodgson A.V."/>
            <person name="Hume J."/>
            <person name="Jackson A."/>
            <person name="Khan Z.M."/>
            <person name="Kovar-Smith C."/>
            <person name="Lewis L.R."/>
            <person name="Lozado R.J."/>
            <person name="Metzker M.L."/>
            <person name="Milosavljevic A."/>
            <person name="Miner G.R."/>
            <person name="Montgomery K.T."/>
            <person name="Morgan M.B."/>
            <person name="Nazareth L.V."/>
            <person name="Scott G."/>
            <person name="Sodergren E."/>
            <person name="Song X.-Z."/>
            <person name="Steffen D."/>
            <person name="Lovering R.C."/>
            <person name="Wheeler D.A."/>
            <person name="Worley K.C."/>
            <person name="Yuan Y."/>
            <person name="Zhang Z."/>
            <person name="Adams C.Q."/>
            <person name="Ansari-Lari M.A."/>
            <person name="Ayele M."/>
            <person name="Brown M.J."/>
            <person name="Chen G."/>
            <person name="Chen Z."/>
            <person name="Clerc-Blankenburg K.P."/>
            <person name="Davis C."/>
            <person name="Delgado O."/>
            <person name="Dinh H.H."/>
            <person name="Draper H."/>
            <person name="Gonzalez-Garay M.L."/>
            <person name="Havlak P."/>
            <person name="Jackson L.R."/>
            <person name="Jacob L.S."/>
            <person name="Kelly S.H."/>
            <person name="Li L."/>
            <person name="Li Z."/>
            <person name="Liu J."/>
            <person name="Liu W."/>
            <person name="Lu J."/>
            <person name="Maheshwari M."/>
            <person name="Nguyen B.-V."/>
            <person name="Okwuonu G.O."/>
            <person name="Pasternak S."/>
            <person name="Perez L.M."/>
            <person name="Plopper F.J.H."/>
            <person name="Santibanez J."/>
            <person name="Shen H."/>
            <person name="Tabor P.E."/>
            <person name="Verduzco D."/>
            <person name="Waldron L."/>
            <person name="Wang Q."/>
            <person name="Williams G.A."/>
            <person name="Zhang J."/>
            <person name="Zhou J."/>
            <person name="Allen C.C."/>
            <person name="Amin A.G."/>
            <person name="Anyalebechi V."/>
            <person name="Bailey M."/>
            <person name="Barbaria J.A."/>
            <person name="Bimage K.E."/>
            <person name="Bryant N.P."/>
            <person name="Burch P.E."/>
            <person name="Burkett C.E."/>
            <person name="Burrell K.L."/>
            <person name="Calderon E."/>
            <person name="Cardenas V."/>
            <person name="Carter K."/>
            <person name="Casias K."/>
            <person name="Cavazos I."/>
            <person name="Cavazos S.R."/>
            <person name="Ceasar H."/>
            <person name="Chacko J."/>
            <person name="Chan S.N."/>
            <person name="Chavez D."/>
            <person name="Christopoulos C."/>
            <person name="Chu J."/>
            <person name="Cockrell R."/>
            <person name="Cox C.D."/>
            <person name="Dang M."/>
            <person name="Dathorne S.R."/>
            <person name="David R."/>
            <person name="Davis C.M."/>
            <person name="Davy-Carroll L."/>
            <person name="Deshazo D.R."/>
            <person name="Donlin J.E."/>
            <person name="D'Souza L."/>
            <person name="Eaves K.A."/>
            <person name="Egan A."/>
            <person name="Emery-Cohen A.J."/>
            <person name="Escotto M."/>
            <person name="Flagg N."/>
            <person name="Forbes L.D."/>
            <person name="Gabisi A.M."/>
            <person name="Garza M."/>
            <person name="Hamilton C."/>
            <person name="Henderson N."/>
            <person name="Hernandez O."/>
            <person name="Hines S."/>
            <person name="Hogues M.E."/>
            <person name="Huang M."/>
            <person name="Idlebird D.G."/>
            <person name="Johnson R."/>
            <person name="Jolivet A."/>
            <person name="Jones S."/>
            <person name="Kagan R."/>
            <person name="King L.M."/>
            <person name="Leal B."/>
            <person name="Lebow H."/>
            <person name="Lee S."/>
            <person name="LeVan J.M."/>
            <person name="Lewis L.C."/>
            <person name="London P."/>
            <person name="Lorensuhewa L.M."/>
            <person name="Loulseged H."/>
            <person name="Lovett D.A."/>
            <person name="Lucier A."/>
            <person name="Lucier R.L."/>
            <person name="Ma J."/>
            <person name="Madu R.C."/>
            <person name="Mapua P."/>
            <person name="Martindale A.D."/>
            <person name="Martinez E."/>
            <person name="Massey E."/>
            <person name="Mawhiney S."/>
            <person name="Meador M.G."/>
            <person name="Mendez S."/>
            <person name="Mercado C."/>
            <person name="Mercado I.C."/>
            <person name="Merritt C.E."/>
            <person name="Miner Z.L."/>
            <person name="Minja E."/>
            <person name="Mitchell T."/>
            <person name="Mohabbat F."/>
            <person name="Mohabbat K."/>
            <person name="Montgomery B."/>
            <person name="Moore N."/>
            <person name="Morris S."/>
            <person name="Munidasa M."/>
            <person name="Ngo R.N."/>
            <person name="Nguyen N.B."/>
            <person name="Nickerson E."/>
            <person name="Nwaokelemeh O.O."/>
            <person name="Nwokenkwo S."/>
            <person name="Obregon M."/>
            <person name="Oguh M."/>
            <person name="Oragunye N."/>
            <person name="Oviedo R.J."/>
            <person name="Parish B.J."/>
            <person name="Parker D.N."/>
            <person name="Parrish J."/>
            <person name="Parks K.L."/>
            <person name="Paul H.A."/>
            <person name="Payton B.A."/>
            <person name="Perez A."/>
            <person name="Perrin W."/>
            <person name="Pickens A."/>
            <person name="Primus E.L."/>
            <person name="Pu L.-L."/>
            <person name="Puazo M."/>
            <person name="Quiles M.M."/>
            <person name="Quiroz J.B."/>
            <person name="Rabata D."/>
            <person name="Reeves K."/>
            <person name="Ruiz S.J."/>
            <person name="Shao H."/>
            <person name="Sisson I."/>
            <person name="Sonaike T."/>
            <person name="Sorelle R.P."/>
            <person name="Sutton A.E."/>
            <person name="Svatek A.F."/>
            <person name="Svetz L.A."/>
            <person name="Tamerisa K.S."/>
            <person name="Taylor T.R."/>
            <person name="Teague B."/>
            <person name="Thomas N."/>
            <person name="Thorn R.D."/>
            <person name="Trejos Z.Y."/>
            <person name="Trevino B.K."/>
            <person name="Ukegbu O.N."/>
            <person name="Urban J.B."/>
            <person name="Vasquez L.I."/>
            <person name="Vera V.A."/>
            <person name="Villasana D.M."/>
            <person name="Wang L."/>
            <person name="Ward-Moore S."/>
            <person name="Warren J.T."/>
            <person name="Wei X."/>
            <person name="White F."/>
            <person name="Williamson A.L."/>
            <person name="Wleczyk R."/>
            <person name="Wooden H.S."/>
            <person name="Wooden S.H."/>
            <person name="Yen J."/>
            <person name="Yoon L."/>
            <person name="Yoon V."/>
            <person name="Zorrilla S.E."/>
            <person name="Nelson D."/>
            <person name="Kucherlapati R."/>
            <person name="Weinstock G."/>
            <person name="Gibbs R.A."/>
        </authorList>
    </citation>
    <scope>NUCLEOTIDE SEQUENCE [LARGE SCALE GENOMIC DNA]</scope>
</reference>
<reference key="2">
    <citation type="journal article" date="2004" name="Genome Res.">
        <title>The status, quality, and expansion of the NIH full-length cDNA project: the Mammalian Gene Collection (MGC).</title>
        <authorList>
            <consortium name="The MGC Project Team"/>
        </authorList>
    </citation>
    <scope>NUCLEOTIDE SEQUENCE [LARGE SCALE MRNA]</scope>
</reference>
<reference key="3">
    <citation type="journal article" date="2015" name="J. Invest. Dermatol.">
        <title>Fidgetin-Like 2: A Microtubule-Based Regulator of Wound Healing.</title>
        <authorList>
            <person name="Charafeddine R.A."/>
            <person name="Makdisi J."/>
            <person name="Schairer D."/>
            <person name="O'Rourke B.P."/>
            <person name="Diaz-Valencia J.D."/>
            <person name="Chouake J."/>
            <person name="Kutner A."/>
            <person name="Krausz A."/>
            <person name="Adler B."/>
            <person name="Nacharaju P."/>
            <person name="Liang H."/>
            <person name="Mukherjee S."/>
            <person name="Friedman J.M."/>
            <person name="Friedman A."/>
            <person name="Nosanchuk J.D."/>
            <person name="Sharp D.J."/>
        </authorList>
    </citation>
    <scope>FUNCTION</scope>
    <scope>SUBCELLULAR LOCATION</scope>
</reference>
<reference key="4">
    <citation type="journal article" date="2023" name="Biophys. J.">
        <title>Fidgetin-like 2 depletion enhances cell migration by regulating GEF-H1, RhoA, and FAK.</title>
        <authorList>
            <person name="Smart K."/>
            <person name="Kramer A.H."/>
            <person name="Smart S."/>
            <person name="Hodgson L."/>
            <person name="Sharp D.J."/>
        </authorList>
    </citation>
    <scope>FUNCTION</scope>
</reference>
<proteinExistence type="evidence at protein level"/>
<name>FIGL2_HUMAN</name>
<evidence type="ECO:0000250" key="1">
    <source>
        <dbReference type="UniProtKB" id="E9QEA3"/>
    </source>
</evidence>
<evidence type="ECO:0000250" key="2">
    <source>
        <dbReference type="UniProtKB" id="J3QK54"/>
    </source>
</evidence>
<evidence type="ECO:0000250" key="3">
    <source>
        <dbReference type="UniProtKB" id="O16299"/>
    </source>
</evidence>
<evidence type="ECO:0000250" key="4">
    <source>
        <dbReference type="UniProtKB" id="Q6PIW4"/>
    </source>
</evidence>
<evidence type="ECO:0000256" key="5">
    <source>
        <dbReference type="SAM" id="MobiDB-lite"/>
    </source>
</evidence>
<evidence type="ECO:0000269" key="6">
    <source>
    </source>
</evidence>
<evidence type="ECO:0000269" key="7">
    <source>
    </source>
</evidence>
<evidence type="ECO:0000305" key="8"/>
<evidence type="ECO:0000312" key="9">
    <source>
        <dbReference type="HGNC" id="HGNC:13287"/>
    </source>
</evidence>